<comment type="function">
    <text evidence="1">Putative taste receptor. TAS1R2/TAS1R3 recognizes diverse natural and synthetic sweeteners (By similarity).</text>
</comment>
<comment type="subunit">
    <text evidence="1">Forms heterodimers with TAS1R3.</text>
</comment>
<comment type="subcellular location">
    <subcellularLocation>
        <location evidence="1">Cell membrane</location>
        <topology evidence="1">Multi-pass membrane protein</topology>
    </subcellularLocation>
</comment>
<comment type="similarity">
    <text evidence="3">Belongs to the G-protein coupled receptor 3 family. TAS1R subfamily.</text>
</comment>
<reference key="1">
    <citation type="journal article" date="2005" name="PLoS Genet.">
        <title>Pseudogenization of a sweet-receptor gene accounts for cats' indifference toward sugar.</title>
        <authorList>
            <person name="Li X."/>
            <person name="Li W."/>
            <person name="Wang H."/>
            <person name="Cao J."/>
            <person name="Maehashi K."/>
            <person name="Hong L."/>
            <person name="Bachmanov A.A."/>
            <person name="Reed D.R."/>
            <person name="Legrand-Defretin V."/>
            <person name="Beauchamp G.K."/>
            <person name="Brand J.G."/>
        </authorList>
    </citation>
    <scope>NUCLEOTIDE SEQUENCE [MRNA]</scope>
</reference>
<organism>
    <name type="scientific">Canis lupus familiaris</name>
    <name type="common">Dog</name>
    <name type="synonym">Canis familiaris</name>
    <dbReference type="NCBI Taxonomy" id="9615"/>
    <lineage>
        <taxon>Eukaryota</taxon>
        <taxon>Metazoa</taxon>
        <taxon>Chordata</taxon>
        <taxon>Craniata</taxon>
        <taxon>Vertebrata</taxon>
        <taxon>Euteleostomi</taxon>
        <taxon>Mammalia</taxon>
        <taxon>Eutheria</taxon>
        <taxon>Laurasiatheria</taxon>
        <taxon>Carnivora</taxon>
        <taxon>Caniformia</taxon>
        <taxon>Canidae</taxon>
        <taxon>Canis</taxon>
    </lineage>
</organism>
<dbReference type="EMBL" id="AY916758">
    <property type="protein sequence ID" value="AAX98691.1"/>
    <property type="molecule type" value="mRNA"/>
</dbReference>
<dbReference type="RefSeq" id="NP_001026989.1">
    <property type="nucleotide sequence ID" value="NM_001031819.1"/>
</dbReference>
<dbReference type="SMR" id="Q49HI0"/>
<dbReference type="FunCoup" id="Q49HI0">
    <property type="interactions" value="52"/>
</dbReference>
<dbReference type="STRING" id="9615.ENSCAFP00000022815"/>
<dbReference type="GlyCosmos" id="Q49HI0">
    <property type="glycosylation" value="9 sites, No reported glycans"/>
</dbReference>
<dbReference type="PaxDb" id="9615-ENSCAFP00000022815"/>
<dbReference type="GeneID" id="478213"/>
<dbReference type="KEGG" id="cfa:478213"/>
<dbReference type="CTD" id="80834"/>
<dbReference type="eggNOG" id="KOG1056">
    <property type="taxonomic scope" value="Eukaryota"/>
</dbReference>
<dbReference type="eggNOG" id="KOG2455">
    <property type="taxonomic scope" value="Eukaryota"/>
</dbReference>
<dbReference type="InParanoid" id="Q49HI0"/>
<dbReference type="OrthoDB" id="9946830at2759"/>
<dbReference type="Proteomes" id="UP000002254">
    <property type="component" value="Unplaced"/>
</dbReference>
<dbReference type="Proteomes" id="UP000694429">
    <property type="component" value="Unplaced"/>
</dbReference>
<dbReference type="Proteomes" id="UP000694542">
    <property type="component" value="Unplaced"/>
</dbReference>
<dbReference type="Proteomes" id="UP000805418">
    <property type="component" value="Unplaced"/>
</dbReference>
<dbReference type="GO" id="GO:0005886">
    <property type="term" value="C:plasma membrane"/>
    <property type="evidence" value="ECO:0007669"/>
    <property type="project" value="UniProtKB-SubCell"/>
</dbReference>
<dbReference type="GO" id="GO:0003842">
    <property type="term" value="F:1-pyrroline-5-carboxylate dehydrogenase activity"/>
    <property type="evidence" value="ECO:0000318"/>
    <property type="project" value="GO_Central"/>
</dbReference>
<dbReference type="GO" id="GO:0004930">
    <property type="term" value="F:G protein-coupled receptor activity"/>
    <property type="evidence" value="ECO:0007669"/>
    <property type="project" value="UniProtKB-KW"/>
</dbReference>
<dbReference type="GO" id="GO:0050909">
    <property type="term" value="P:sensory perception of taste"/>
    <property type="evidence" value="ECO:0007669"/>
    <property type="project" value="UniProtKB-KW"/>
</dbReference>
<dbReference type="FunFam" id="3.40.50.2300:FF:000016">
    <property type="entry name" value="Taste 1 receptor member 2"/>
    <property type="match status" value="1"/>
</dbReference>
<dbReference type="FunFam" id="2.10.50.30:FF:000004">
    <property type="entry name" value="Taste receptor type 1 member 3-like protein"/>
    <property type="match status" value="1"/>
</dbReference>
<dbReference type="Gene3D" id="3.40.50.2300">
    <property type="match status" value="2"/>
</dbReference>
<dbReference type="Gene3D" id="2.10.50.30">
    <property type="entry name" value="GPCR, family 3, nine cysteines domain"/>
    <property type="match status" value="1"/>
</dbReference>
<dbReference type="InterPro" id="IPR001828">
    <property type="entry name" value="ANF_lig-bd_rcpt"/>
</dbReference>
<dbReference type="InterPro" id="IPR000337">
    <property type="entry name" value="GPCR_3"/>
</dbReference>
<dbReference type="InterPro" id="IPR011500">
    <property type="entry name" value="GPCR_3_9-Cys_dom"/>
</dbReference>
<dbReference type="InterPro" id="IPR038550">
    <property type="entry name" value="GPCR_3_9-Cys_sf"/>
</dbReference>
<dbReference type="InterPro" id="IPR017978">
    <property type="entry name" value="GPCR_3_C"/>
</dbReference>
<dbReference type="InterPro" id="IPR000068">
    <property type="entry name" value="GPCR_3_Ca_sens_rcpt-rel"/>
</dbReference>
<dbReference type="InterPro" id="IPR028082">
    <property type="entry name" value="Peripla_BP_I"/>
</dbReference>
<dbReference type="PANTHER" id="PTHR24061">
    <property type="entry name" value="CALCIUM-SENSING RECEPTOR-RELATED"/>
    <property type="match status" value="1"/>
</dbReference>
<dbReference type="PANTHER" id="PTHR24061:SF517">
    <property type="entry name" value="TASTE RECEPTOR TYPE 1 MEMBER 2"/>
    <property type="match status" value="1"/>
</dbReference>
<dbReference type="Pfam" id="PF00003">
    <property type="entry name" value="7tm_3"/>
    <property type="match status" value="1"/>
</dbReference>
<dbReference type="Pfam" id="PF01094">
    <property type="entry name" value="ANF_receptor"/>
    <property type="match status" value="1"/>
</dbReference>
<dbReference type="Pfam" id="PF07562">
    <property type="entry name" value="NCD3G"/>
    <property type="match status" value="1"/>
</dbReference>
<dbReference type="PRINTS" id="PR00248">
    <property type="entry name" value="GPCRMGR"/>
</dbReference>
<dbReference type="SUPFAM" id="SSF53822">
    <property type="entry name" value="Periplasmic binding protein-like I"/>
    <property type="match status" value="1"/>
</dbReference>
<dbReference type="SUPFAM" id="SSF57586">
    <property type="entry name" value="TNF receptor-like"/>
    <property type="match status" value="1"/>
</dbReference>
<dbReference type="PROSITE" id="PS50259">
    <property type="entry name" value="G_PROTEIN_RECEP_F3_4"/>
    <property type="match status" value="1"/>
</dbReference>
<name>TS1R2_CANLF</name>
<evidence type="ECO:0000250" key="1"/>
<evidence type="ECO:0000255" key="2"/>
<evidence type="ECO:0000305" key="3"/>
<proteinExistence type="evidence at transcript level"/>
<gene>
    <name type="primary">TAS1R2</name>
    <name type="synonym">T1R2</name>
</gene>
<feature type="signal peptide" evidence="2">
    <location>
        <begin position="1"/>
        <end position="19"/>
    </location>
</feature>
<feature type="chain" id="PRO_0000285549" description="Taste receptor type 1 member 2">
    <location>
        <begin position="20"/>
        <end position="836"/>
    </location>
</feature>
<feature type="topological domain" description="Extracellular" evidence="2">
    <location>
        <begin position="20"/>
        <end position="565"/>
    </location>
</feature>
<feature type="transmembrane region" description="Helical; Name=1" evidence="2">
    <location>
        <begin position="566"/>
        <end position="586"/>
    </location>
</feature>
<feature type="topological domain" description="Cytoplasmic" evidence="2">
    <location>
        <begin position="587"/>
        <end position="601"/>
    </location>
</feature>
<feature type="transmembrane region" description="Helical; Name=2" evidence="2">
    <location>
        <begin position="602"/>
        <end position="622"/>
    </location>
</feature>
<feature type="topological domain" description="Extracellular" evidence="2">
    <location>
        <begin position="623"/>
        <end position="634"/>
    </location>
</feature>
<feature type="transmembrane region" description="Helical; Name=3" evidence="2">
    <location>
        <begin position="635"/>
        <end position="655"/>
    </location>
</feature>
<feature type="topological domain" description="Cytoplasmic" evidence="2">
    <location>
        <begin position="656"/>
        <end position="680"/>
    </location>
</feature>
<feature type="transmembrane region" description="Helical; Name=4" evidence="2">
    <location>
        <begin position="681"/>
        <end position="701"/>
    </location>
</feature>
<feature type="topological domain" description="Extracellular" evidence="2">
    <location>
        <begin position="702"/>
        <end position="724"/>
    </location>
</feature>
<feature type="transmembrane region" description="Helical; Name=5" evidence="2">
    <location>
        <begin position="725"/>
        <end position="745"/>
    </location>
</feature>
<feature type="topological domain" description="Cytoplasmic" evidence="2">
    <location>
        <begin position="746"/>
        <end position="757"/>
    </location>
</feature>
<feature type="transmembrane region" description="Helical; Name=6" evidence="2">
    <location>
        <begin position="758"/>
        <end position="778"/>
    </location>
</feature>
<feature type="topological domain" description="Extracellular" evidence="2">
    <location>
        <begin position="779"/>
        <end position="781"/>
    </location>
</feature>
<feature type="transmembrane region" description="Helical; Name=7" evidence="2">
    <location>
        <begin position="782"/>
        <end position="802"/>
    </location>
</feature>
<feature type="topological domain" description="Cytoplasmic" evidence="2">
    <location>
        <begin position="803"/>
        <end position="836"/>
    </location>
</feature>
<feature type="glycosylation site" description="N-linked (GlcNAc...) asparagine" evidence="2">
    <location>
        <position position="84"/>
    </location>
</feature>
<feature type="glycosylation site" description="N-linked (GlcNAc...) asparagine" evidence="2">
    <location>
        <position position="292"/>
    </location>
</feature>
<feature type="glycosylation site" description="N-linked (GlcNAc...) asparagine" evidence="2">
    <location>
        <position position="312"/>
    </location>
</feature>
<feature type="glycosylation site" description="N-linked (GlcNAc...) asparagine" evidence="2">
    <location>
        <position position="351"/>
    </location>
</feature>
<feature type="glycosylation site" description="N-linked (GlcNAc...) asparagine" evidence="2">
    <location>
        <position position="427"/>
    </location>
</feature>
<feature type="glycosylation site" description="N-linked (GlcNAc...) asparagine" evidence="2">
    <location>
        <position position="479"/>
    </location>
</feature>
<feature type="glycosylation site" description="N-linked (GlcNAc...) asparagine" evidence="2">
    <location>
        <position position="486"/>
    </location>
</feature>
<feature type="glycosylation site" description="N-linked (GlcNAc...) asparagine" evidence="2">
    <location>
        <position position="526"/>
    </location>
</feature>
<feature type="glycosylation site" description="N-linked (GlcNAc...) asparagine" evidence="2">
    <location>
        <position position="546"/>
    </location>
</feature>
<keyword id="KW-1003">Cell membrane</keyword>
<keyword id="KW-0297">G-protein coupled receptor</keyword>
<keyword id="KW-0325">Glycoprotein</keyword>
<keyword id="KW-0472">Membrane</keyword>
<keyword id="KW-0675">Receptor</keyword>
<keyword id="KW-1185">Reference proteome</keyword>
<keyword id="KW-0716">Sensory transduction</keyword>
<keyword id="KW-0732">Signal</keyword>
<keyword id="KW-0919">Taste</keyword>
<keyword id="KW-0807">Transducer</keyword>
<keyword id="KW-0812">Transmembrane</keyword>
<keyword id="KW-1133">Transmembrane helix</keyword>
<protein>
    <recommendedName>
        <fullName>Taste receptor type 1 member 2</fullName>
    </recommendedName>
    <alternativeName>
        <fullName>Sweet taste receptor T1R2</fullName>
    </alternativeName>
</protein>
<accession>Q49HI0</accession>
<sequence length="836" mass="94960">MGPRAKAVCSLFILLQVLAEPAENSDFYLPGDYLLGGLFTLHANVKGTVHLSFLQVPQCKKYEMKVLGYNLMQAMRFAVEEINNRSDLLPGVLLGYEIVDVCYISNNVQPVLYFLAREDYSLPIQEDYSHYVPRVLAVIGPDNSESTTTVAHFLSLFLLPQITYSAISDDLRDKQHFPALLRTVAGADHQIEAMVQLLLHFNWNWIIVLVSSDDYGRYNSQLLNDRLATGDICIAFQETLPMPQPDQVVTEWERQRLEAIVGKLQQSSARVVVLFSPDLILHNFFREVLRQNFTGAVWIASESWAIDPVLHNLTELRQTGTFLGVTTQSVPIPGFSEFRIRRTPVRLPEPNRTSLEATCNQECDTCQDTTASFNSILMLSGERVVYNVYSAVYAVAHALHSLLGCTQACSKEVVYPWQLLKEIWKVNFTLLGHNVFFGQQGDVLMPMEVIQWQWDLSQNPFQSIASYYPKLRQLKAIHNISWHTANNTIPVSMCSKDCHPGQRKKPVGIHSCCFECIDCLPGTFLNRTADEFDCQPCPSYEWSHRNDTSCFKRRLAFLEWHEPSTIFVVMLTILGFLSTLAIMVIFWRHLHTPVVRSAGGPMCFLMLVPLLLAYAMVPMYIGQPTFFSCLWRQTFFTLCFTICISCITVRSFQIVCIFKMARRLPRAYGYWVRCHGPYVFVASFMVLKVVIVAGNVLATTANPTARPDPDDPNIMVLSCNYRRALLFNTSLDLLLSVAGFSFAYMGKELPTNYNEAKFITLCMTFYFTSSVSLCTFMSVYDGVLVTILDLLITVLNLLGISFGYFGPKCYMVLFYPERNTQVYFSSMIQGYTMGKD</sequence>